<feature type="chain" id="PRO_0000073053" description="Ovomucoid">
    <location>
        <begin position="1" status="less than"/>
        <end position="54" status="greater than"/>
    </location>
</feature>
<feature type="domain" description="Kazal-like" evidence="1">
    <location>
        <begin position="4"/>
        <end position="54"/>
    </location>
</feature>
<feature type="site" description="Reactive bond 3">
    <location>
        <begin position="16"/>
        <end position="17"/>
    </location>
</feature>
<feature type="glycosylation site" description="N-linked (GlcNAc...) asparagine">
    <location>
        <position position="43"/>
    </location>
</feature>
<feature type="disulfide bond">
    <location>
        <begin position="6"/>
        <end position="36"/>
    </location>
</feature>
<feature type="disulfide bond">
    <location>
        <begin position="14"/>
        <end position="33"/>
    </location>
</feature>
<feature type="disulfide bond">
    <location>
        <begin position="22"/>
        <end position="54"/>
    </location>
</feature>
<feature type="non-terminal residue">
    <location>
        <position position="1"/>
    </location>
</feature>
<feature type="non-terminal residue">
    <location>
        <position position="54"/>
    </location>
</feature>
<evidence type="ECO:0000255" key="1">
    <source>
        <dbReference type="PROSITE-ProRule" id="PRU00798"/>
    </source>
</evidence>
<dbReference type="PIR" id="E31444">
    <property type="entry name" value="E31444"/>
</dbReference>
<dbReference type="SMR" id="P68147"/>
<dbReference type="GO" id="GO:0005576">
    <property type="term" value="C:extracellular region"/>
    <property type="evidence" value="ECO:0007669"/>
    <property type="project" value="UniProtKB-SubCell"/>
</dbReference>
<dbReference type="GO" id="GO:0004867">
    <property type="term" value="F:serine-type endopeptidase inhibitor activity"/>
    <property type="evidence" value="ECO:0007669"/>
    <property type="project" value="UniProtKB-KW"/>
</dbReference>
<dbReference type="CDD" id="cd00104">
    <property type="entry name" value="KAZAL_FS"/>
    <property type="match status" value="1"/>
</dbReference>
<dbReference type="FunFam" id="3.30.60.30:FF:000037">
    <property type="entry name" value="Ovomucoid"/>
    <property type="match status" value="1"/>
</dbReference>
<dbReference type="Gene3D" id="3.30.60.30">
    <property type="match status" value="1"/>
</dbReference>
<dbReference type="InterPro" id="IPR051597">
    <property type="entry name" value="Bifunctional_prot_inhibitor"/>
</dbReference>
<dbReference type="InterPro" id="IPR002350">
    <property type="entry name" value="Kazal_dom"/>
</dbReference>
<dbReference type="InterPro" id="IPR036058">
    <property type="entry name" value="Kazal_dom_sf"/>
</dbReference>
<dbReference type="InterPro" id="IPR001239">
    <property type="entry name" value="Prot_inh_Kazal-m"/>
</dbReference>
<dbReference type="PANTHER" id="PTHR47729:SF1">
    <property type="entry name" value="OVOMUCOID-LIKE-RELATED"/>
    <property type="match status" value="1"/>
</dbReference>
<dbReference type="PANTHER" id="PTHR47729">
    <property type="entry name" value="SERINE PEPTIDASE INHIBITOR, KAZAL TYPE 2, TANDEM DUPLICATE 1-RELATED"/>
    <property type="match status" value="1"/>
</dbReference>
<dbReference type="Pfam" id="PF00050">
    <property type="entry name" value="Kazal_1"/>
    <property type="match status" value="1"/>
</dbReference>
<dbReference type="PRINTS" id="PR00290">
    <property type="entry name" value="KAZALINHBTR"/>
</dbReference>
<dbReference type="SMART" id="SM00280">
    <property type="entry name" value="KAZAL"/>
    <property type="match status" value="1"/>
</dbReference>
<dbReference type="SUPFAM" id="SSF100895">
    <property type="entry name" value="Kazal-type serine protease inhibitors"/>
    <property type="match status" value="1"/>
</dbReference>
<dbReference type="PROSITE" id="PS00282">
    <property type="entry name" value="KAZAL_1"/>
    <property type="match status" value="1"/>
</dbReference>
<dbReference type="PROSITE" id="PS51465">
    <property type="entry name" value="KAZAL_2"/>
    <property type="match status" value="1"/>
</dbReference>
<keyword id="KW-0903">Direct protein sequencing</keyword>
<keyword id="KW-1015">Disulfide bond</keyword>
<keyword id="KW-0325">Glycoprotein</keyword>
<keyword id="KW-0646">Protease inhibitor</keyword>
<keyword id="KW-0677">Repeat</keyword>
<keyword id="KW-0964">Secreted</keyword>
<keyword id="KW-0722">Serine protease inhibitor</keyword>
<name>IOVO_ALERU</name>
<organism>
    <name type="scientific">Alectoris rufa</name>
    <name type="common">Red-legged partridge</name>
    <name type="synonym">Tetrao rufus</name>
    <dbReference type="NCBI Taxonomy" id="9079"/>
    <lineage>
        <taxon>Eukaryota</taxon>
        <taxon>Metazoa</taxon>
        <taxon>Chordata</taxon>
        <taxon>Craniata</taxon>
        <taxon>Vertebrata</taxon>
        <taxon>Euteleostomi</taxon>
        <taxon>Archelosauria</taxon>
        <taxon>Archosauria</taxon>
        <taxon>Dinosauria</taxon>
        <taxon>Saurischia</taxon>
        <taxon>Theropoda</taxon>
        <taxon>Coelurosauria</taxon>
        <taxon>Aves</taxon>
        <taxon>Neognathae</taxon>
        <taxon>Galloanserae</taxon>
        <taxon>Galliformes</taxon>
        <taxon>Phasianidae</taxon>
        <taxon>Perdicinae</taxon>
        <taxon>Alectoris</taxon>
    </lineage>
</organism>
<protein>
    <recommendedName>
        <fullName>Ovomucoid</fullName>
    </recommendedName>
</protein>
<proteinExistence type="evidence at protein level"/>
<sequence>LAAVDCSEYPKPACTLEYRPLCGSDSKTYGNKCNFCNAVVESNGTLTLSHFGKC</sequence>
<accession>P68147</accession>
<accession>P05593</accession>
<comment type="subcellular location">
    <subcellularLocation>
        <location>Secreted</location>
    </subcellularLocation>
</comment>
<comment type="domain">
    <text>Avian ovomucoid consists of three homologous, tandem Kazal family inhibitory domains.</text>
</comment>
<reference key="1">
    <citation type="journal article" date="1987" name="Biochemistry">
        <title>Ovomucoid third domains from 100 avian species: isolation, sequences, and hypervariability of enzyme-inhibitor contact residues.</title>
        <authorList>
            <person name="Laskowski M. Jr."/>
            <person name="Kato I."/>
            <person name="Ardelt W."/>
            <person name="Cook J."/>
            <person name="Denton A."/>
            <person name="Empie M.W."/>
            <person name="Kohr W.J."/>
            <person name="Park S.J."/>
            <person name="Parks K."/>
            <person name="Schatzley B.L."/>
            <person name="Schoenberger O.L."/>
            <person name="Tashiro M."/>
            <person name="Vichot G."/>
            <person name="Whatley H.E."/>
            <person name="Wieczorek A."/>
            <person name="Wieczorek M."/>
        </authorList>
    </citation>
    <scope>PROTEIN SEQUENCE</scope>
</reference>